<comment type="function">
    <text evidence="1">Participates in chromosomal partition during cell division. May act via the formation of a condensin-like complex containing Smc and ScpB that pull DNA away from mid-cell into both cell halves.</text>
</comment>
<comment type="subunit">
    <text evidence="1">Component of a cohesin-like complex composed of ScpA, ScpB and the Smc homodimer, in which ScpA and ScpB bind to the head domain of Smc. The presence of the three proteins is required for the association of the complex with DNA.</text>
</comment>
<comment type="subcellular location">
    <subcellularLocation>
        <location evidence="1">Cytoplasm</location>
    </subcellularLocation>
    <text evidence="1">Associated with two foci at the outer edges of the nucleoid region in young cells, and at four foci within both cell halves in older cells.</text>
</comment>
<comment type="similarity">
    <text evidence="1">Belongs to the ScpA family.</text>
</comment>
<organism>
    <name type="scientific">Bacillus thuringiensis subsp. konkukian (strain 97-27)</name>
    <dbReference type="NCBI Taxonomy" id="281309"/>
    <lineage>
        <taxon>Bacteria</taxon>
        <taxon>Bacillati</taxon>
        <taxon>Bacillota</taxon>
        <taxon>Bacilli</taxon>
        <taxon>Bacillales</taxon>
        <taxon>Bacillaceae</taxon>
        <taxon>Bacillus</taxon>
        <taxon>Bacillus cereus group</taxon>
    </lineage>
</organism>
<feature type="chain" id="PRO_0000211079" description="Segregation and condensation protein A">
    <location>
        <begin position="1"/>
        <end position="247"/>
    </location>
</feature>
<reference key="1">
    <citation type="journal article" date="2006" name="J. Bacteriol.">
        <title>Pathogenomic sequence analysis of Bacillus cereus and Bacillus thuringiensis isolates closely related to Bacillus anthracis.</title>
        <authorList>
            <person name="Han C.S."/>
            <person name="Xie G."/>
            <person name="Challacombe J.F."/>
            <person name="Altherr M.R."/>
            <person name="Bhotika S.S."/>
            <person name="Bruce D."/>
            <person name="Campbell C.S."/>
            <person name="Campbell M.L."/>
            <person name="Chen J."/>
            <person name="Chertkov O."/>
            <person name="Cleland C."/>
            <person name="Dimitrijevic M."/>
            <person name="Doggett N.A."/>
            <person name="Fawcett J.J."/>
            <person name="Glavina T."/>
            <person name="Goodwin L.A."/>
            <person name="Hill K.K."/>
            <person name="Hitchcock P."/>
            <person name="Jackson P.J."/>
            <person name="Keim P."/>
            <person name="Kewalramani A.R."/>
            <person name="Longmire J."/>
            <person name="Lucas S."/>
            <person name="Malfatti S."/>
            <person name="McMurry K."/>
            <person name="Meincke L.J."/>
            <person name="Misra M."/>
            <person name="Moseman B.L."/>
            <person name="Mundt M."/>
            <person name="Munk A.C."/>
            <person name="Okinaka R.T."/>
            <person name="Parson-Quintana B."/>
            <person name="Reilly L.P."/>
            <person name="Richardson P."/>
            <person name="Robinson D.L."/>
            <person name="Rubin E."/>
            <person name="Saunders E."/>
            <person name="Tapia R."/>
            <person name="Tesmer J.G."/>
            <person name="Thayer N."/>
            <person name="Thompson L.S."/>
            <person name="Tice H."/>
            <person name="Ticknor L.O."/>
            <person name="Wills P.L."/>
            <person name="Brettin T.S."/>
            <person name="Gilna P."/>
        </authorList>
    </citation>
    <scope>NUCLEOTIDE SEQUENCE [LARGE SCALE GENOMIC DNA]</scope>
    <source>
        <strain>97-27</strain>
    </source>
</reference>
<accession>Q6HEA8</accession>
<sequence length="247" mass="29346">MQYNFKVEAFEGPLDLLLHLIHRYEIDIYNIPVAEITEQYLSYVHTMKELQLDVASEYLVMAATLLQIKSKMLLPKHEEDVLDNGDDFIDDPRQELMERLIEYKKYKQVATELKEREQERAQLYTRPPIDFTSLQQEEETNLPLDVTLYDMLAAFQKLMRRKKAKKPVTTRITRQEIPIEQRMTDILKQLEIQGGRQSFYDLFVDDEREIMVVTFLAVLELMKNQQIIIEQEHNFDEIFVSSYTKSA</sequence>
<dbReference type="EMBL" id="AE017355">
    <property type="protein sequence ID" value="AAT60715.1"/>
    <property type="molecule type" value="Genomic_DNA"/>
</dbReference>
<dbReference type="RefSeq" id="WP_001199758.1">
    <property type="nucleotide sequence ID" value="NC_005957.1"/>
</dbReference>
<dbReference type="RefSeq" id="YP_038118.1">
    <property type="nucleotide sequence ID" value="NC_005957.1"/>
</dbReference>
<dbReference type="SMR" id="Q6HEA8"/>
<dbReference type="GeneID" id="93007047"/>
<dbReference type="KEGG" id="btk:BT9727_3799"/>
<dbReference type="PATRIC" id="fig|281309.8.peg.4049"/>
<dbReference type="HOGENOM" id="CLU_038686_3_1_9"/>
<dbReference type="Proteomes" id="UP000001301">
    <property type="component" value="Chromosome"/>
</dbReference>
<dbReference type="GO" id="GO:0005737">
    <property type="term" value="C:cytoplasm"/>
    <property type="evidence" value="ECO:0007669"/>
    <property type="project" value="UniProtKB-SubCell"/>
</dbReference>
<dbReference type="GO" id="GO:0051301">
    <property type="term" value="P:cell division"/>
    <property type="evidence" value="ECO:0007669"/>
    <property type="project" value="UniProtKB-KW"/>
</dbReference>
<dbReference type="GO" id="GO:0007059">
    <property type="term" value="P:chromosome segregation"/>
    <property type="evidence" value="ECO:0007669"/>
    <property type="project" value="UniProtKB-UniRule"/>
</dbReference>
<dbReference type="GO" id="GO:0006260">
    <property type="term" value="P:DNA replication"/>
    <property type="evidence" value="ECO:0007669"/>
    <property type="project" value="UniProtKB-UniRule"/>
</dbReference>
<dbReference type="Gene3D" id="6.10.250.2410">
    <property type="match status" value="1"/>
</dbReference>
<dbReference type="Gene3D" id="1.10.10.580">
    <property type="entry name" value="Structural maintenance of chromosome 1. Chain E"/>
    <property type="match status" value="1"/>
</dbReference>
<dbReference type="HAMAP" id="MF_01805">
    <property type="entry name" value="ScpA"/>
    <property type="match status" value="1"/>
</dbReference>
<dbReference type="InterPro" id="IPR003768">
    <property type="entry name" value="ScpA"/>
</dbReference>
<dbReference type="InterPro" id="IPR023093">
    <property type="entry name" value="ScpA-like_C"/>
</dbReference>
<dbReference type="NCBIfam" id="NF000992">
    <property type="entry name" value="PRK00104.1-1"/>
    <property type="match status" value="1"/>
</dbReference>
<dbReference type="NCBIfam" id="NF000995">
    <property type="entry name" value="PRK00104.1-4"/>
    <property type="match status" value="1"/>
</dbReference>
<dbReference type="PANTHER" id="PTHR33969">
    <property type="entry name" value="SEGREGATION AND CONDENSATION PROTEIN A"/>
    <property type="match status" value="1"/>
</dbReference>
<dbReference type="PANTHER" id="PTHR33969:SF2">
    <property type="entry name" value="SEGREGATION AND CONDENSATION PROTEIN A"/>
    <property type="match status" value="1"/>
</dbReference>
<dbReference type="Pfam" id="PF02616">
    <property type="entry name" value="SMC_ScpA"/>
    <property type="match status" value="1"/>
</dbReference>
<evidence type="ECO:0000255" key="1">
    <source>
        <dbReference type="HAMAP-Rule" id="MF_01805"/>
    </source>
</evidence>
<protein>
    <recommendedName>
        <fullName evidence="1">Segregation and condensation protein A</fullName>
    </recommendedName>
</protein>
<name>SCPA_BACHK</name>
<keyword id="KW-0131">Cell cycle</keyword>
<keyword id="KW-0132">Cell division</keyword>
<keyword id="KW-0159">Chromosome partition</keyword>
<keyword id="KW-0963">Cytoplasm</keyword>
<gene>
    <name evidence="1" type="primary">scpA</name>
    <name type="ordered locus">BT9727_3799</name>
</gene>
<proteinExistence type="inferred from homology"/>